<proteinExistence type="evidence at protein level"/>
<keyword id="KW-0030">Aminoacyl-tRNA synthetase</keyword>
<keyword id="KW-0067">ATP-binding</keyword>
<keyword id="KW-0963">Cytoplasm</keyword>
<keyword id="KW-0436">Ligase</keyword>
<keyword id="KW-0547">Nucleotide-binding</keyword>
<keyword id="KW-0648">Protein biosynthesis</keyword>
<organism>
    <name type="scientific">Staphylococcus aureus (strain N315)</name>
    <dbReference type="NCBI Taxonomy" id="158879"/>
    <lineage>
        <taxon>Bacteria</taxon>
        <taxon>Bacillati</taxon>
        <taxon>Bacillota</taxon>
        <taxon>Bacilli</taxon>
        <taxon>Bacillales</taxon>
        <taxon>Staphylococcaceae</taxon>
        <taxon>Staphylococcus</taxon>
    </lineage>
</organism>
<comment type="function">
    <text evidence="1">Catalyzes the attachment of tryptophan to tRNA(Trp).</text>
</comment>
<comment type="catalytic activity">
    <reaction evidence="1">
        <text>tRNA(Trp) + L-tryptophan + ATP = L-tryptophyl-tRNA(Trp) + AMP + diphosphate + H(+)</text>
        <dbReference type="Rhea" id="RHEA:24080"/>
        <dbReference type="Rhea" id="RHEA-COMP:9671"/>
        <dbReference type="Rhea" id="RHEA-COMP:9705"/>
        <dbReference type="ChEBI" id="CHEBI:15378"/>
        <dbReference type="ChEBI" id="CHEBI:30616"/>
        <dbReference type="ChEBI" id="CHEBI:33019"/>
        <dbReference type="ChEBI" id="CHEBI:57912"/>
        <dbReference type="ChEBI" id="CHEBI:78442"/>
        <dbReference type="ChEBI" id="CHEBI:78535"/>
        <dbReference type="ChEBI" id="CHEBI:456215"/>
        <dbReference type="EC" id="6.1.1.2"/>
    </reaction>
</comment>
<comment type="subunit">
    <text evidence="1">Homodimer.</text>
</comment>
<comment type="subcellular location">
    <subcellularLocation>
        <location evidence="1">Cytoplasm</location>
    </subcellularLocation>
</comment>
<comment type="similarity">
    <text evidence="1">Belongs to the class-I aminoacyl-tRNA synthetase family.</text>
</comment>
<gene>
    <name evidence="1" type="primary">trpS</name>
    <name type="ordered locus">SA0855</name>
</gene>
<name>SYW_STAAN</name>
<dbReference type="EC" id="6.1.1.2" evidence="1"/>
<dbReference type="EMBL" id="BA000018">
    <property type="protein sequence ID" value="BAB42096.1"/>
    <property type="molecule type" value="Genomic_DNA"/>
</dbReference>
<dbReference type="PIR" id="E89867">
    <property type="entry name" value="E89867"/>
</dbReference>
<dbReference type="RefSeq" id="WP_000448934.1">
    <property type="nucleotide sequence ID" value="NC_002745.2"/>
</dbReference>
<dbReference type="SMR" id="P67593"/>
<dbReference type="EnsemblBacteria" id="BAB42096">
    <property type="protein sequence ID" value="BAB42096"/>
    <property type="gene ID" value="BAB42096"/>
</dbReference>
<dbReference type="KEGG" id="sau:SA0855"/>
<dbReference type="HOGENOM" id="CLU_029244_1_1_9"/>
<dbReference type="GO" id="GO:0005829">
    <property type="term" value="C:cytosol"/>
    <property type="evidence" value="ECO:0007669"/>
    <property type="project" value="TreeGrafter"/>
</dbReference>
<dbReference type="GO" id="GO:0005524">
    <property type="term" value="F:ATP binding"/>
    <property type="evidence" value="ECO:0007669"/>
    <property type="project" value="UniProtKB-UniRule"/>
</dbReference>
<dbReference type="GO" id="GO:0004830">
    <property type="term" value="F:tryptophan-tRNA ligase activity"/>
    <property type="evidence" value="ECO:0007669"/>
    <property type="project" value="UniProtKB-UniRule"/>
</dbReference>
<dbReference type="GO" id="GO:0006436">
    <property type="term" value="P:tryptophanyl-tRNA aminoacylation"/>
    <property type="evidence" value="ECO:0007669"/>
    <property type="project" value="UniProtKB-UniRule"/>
</dbReference>
<dbReference type="CDD" id="cd00806">
    <property type="entry name" value="TrpRS_core"/>
    <property type="match status" value="1"/>
</dbReference>
<dbReference type="FunFam" id="1.10.240.10:FF:000002">
    <property type="entry name" value="Tryptophan--tRNA ligase"/>
    <property type="match status" value="1"/>
</dbReference>
<dbReference type="Gene3D" id="3.40.50.620">
    <property type="entry name" value="HUPs"/>
    <property type="match status" value="1"/>
</dbReference>
<dbReference type="Gene3D" id="1.10.240.10">
    <property type="entry name" value="Tyrosyl-Transfer RNA Synthetase"/>
    <property type="match status" value="1"/>
</dbReference>
<dbReference type="HAMAP" id="MF_00140_B">
    <property type="entry name" value="Trp_tRNA_synth_B"/>
    <property type="match status" value="1"/>
</dbReference>
<dbReference type="InterPro" id="IPR001412">
    <property type="entry name" value="aa-tRNA-synth_I_CS"/>
</dbReference>
<dbReference type="InterPro" id="IPR002305">
    <property type="entry name" value="aa-tRNA-synth_Ic"/>
</dbReference>
<dbReference type="InterPro" id="IPR014729">
    <property type="entry name" value="Rossmann-like_a/b/a_fold"/>
</dbReference>
<dbReference type="InterPro" id="IPR002306">
    <property type="entry name" value="Trp-tRNA-ligase"/>
</dbReference>
<dbReference type="InterPro" id="IPR024109">
    <property type="entry name" value="Trp-tRNA-ligase_bac-type"/>
</dbReference>
<dbReference type="InterPro" id="IPR050203">
    <property type="entry name" value="Trp-tRNA_synthetase"/>
</dbReference>
<dbReference type="NCBIfam" id="TIGR00233">
    <property type="entry name" value="trpS"/>
    <property type="match status" value="1"/>
</dbReference>
<dbReference type="PANTHER" id="PTHR43766">
    <property type="entry name" value="TRYPTOPHAN--TRNA LIGASE, MITOCHONDRIAL"/>
    <property type="match status" value="1"/>
</dbReference>
<dbReference type="PANTHER" id="PTHR43766:SF1">
    <property type="entry name" value="TRYPTOPHAN--TRNA LIGASE, MITOCHONDRIAL"/>
    <property type="match status" value="1"/>
</dbReference>
<dbReference type="Pfam" id="PF00579">
    <property type="entry name" value="tRNA-synt_1b"/>
    <property type="match status" value="1"/>
</dbReference>
<dbReference type="PRINTS" id="PR01039">
    <property type="entry name" value="TRNASYNTHTRP"/>
</dbReference>
<dbReference type="SUPFAM" id="SSF52374">
    <property type="entry name" value="Nucleotidylyl transferase"/>
    <property type="match status" value="1"/>
</dbReference>
<dbReference type="PROSITE" id="PS00178">
    <property type="entry name" value="AA_TRNA_LIGASE_I"/>
    <property type="match status" value="1"/>
</dbReference>
<sequence>METLFSGIQPSGIPTIGNYIGALKQFVDVQNDYDCYFCIVDQHAITMPQDRLKLRKQTRQLAAIYLASGIDPDKATLFIQSEVPAHVQAGWMLTTIASVGELERMTQYKDKAQKAVEGIPAGLLTYPPLMAADIVLYNTNIVPVGDDQKQHIELTRNLVDRFNSRYNDVLVKPEIRMPKVGGRVMSLQDPTRKMSKSDDNAKNFISLLDEPNVAAKKIKSAVTDSDGIIKFDRDNKPGITNLISIYAGLTDMPIKDIEAKYEGEGYGKFKGDLAEIVKAFLVEFQEKYESFYNSDKLDDILDQGRDKAHKVSFKTVKKMEKAMGLGRKR</sequence>
<reference key="1">
    <citation type="journal article" date="2001" name="Lancet">
        <title>Whole genome sequencing of meticillin-resistant Staphylococcus aureus.</title>
        <authorList>
            <person name="Kuroda M."/>
            <person name="Ohta T."/>
            <person name="Uchiyama I."/>
            <person name="Baba T."/>
            <person name="Yuzawa H."/>
            <person name="Kobayashi I."/>
            <person name="Cui L."/>
            <person name="Oguchi A."/>
            <person name="Aoki K."/>
            <person name="Nagai Y."/>
            <person name="Lian J.-Q."/>
            <person name="Ito T."/>
            <person name="Kanamori M."/>
            <person name="Matsumaru H."/>
            <person name="Maruyama A."/>
            <person name="Murakami H."/>
            <person name="Hosoyama A."/>
            <person name="Mizutani-Ui Y."/>
            <person name="Takahashi N.K."/>
            <person name="Sawano T."/>
            <person name="Inoue R."/>
            <person name="Kaito C."/>
            <person name="Sekimizu K."/>
            <person name="Hirakawa H."/>
            <person name="Kuhara S."/>
            <person name="Goto S."/>
            <person name="Yabuzaki J."/>
            <person name="Kanehisa M."/>
            <person name="Yamashita A."/>
            <person name="Oshima K."/>
            <person name="Furuya K."/>
            <person name="Yoshino C."/>
            <person name="Shiba T."/>
            <person name="Hattori M."/>
            <person name="Ogasawara N."/>
            <person name="Hayashi H."/>
            <person name="Hiramatsu K."/>
        </authorList>
    </citation>
    <scope>NUCLEOTIDE SEQUENCE [LARGE SCALE GENOMIC DNA]</scope>
    <source>
        <strain>N315</strain>
    </source>
</reference>
<reference key="2">
    <citation type="submission" date="2007-10" db="UniProtKB">
        <title>Shotgun proteomic analysis of total and membrane protein extracts of S. aureus strain N315.</title>
        <authorList>
            <person name="Vaezzadeh A.R."/>
            <person name="Deshusses J."/>
            <person name="Lescuyer P."/>
            <person name="Hochstrasser D.F."/>
        </authorList>
    </citation>
    <scope>IDENTIFICATION BY MASS SPECTROMETRY [LARGE SCALE ANALYSIS]</scope>
    <source>
        <strain>N315</strain>
    </source>
</reference>
<evidence type="ECO:0000255" key="1">
    <source>
        <dbReference type="HAMAP-Rule" id="MF_00140"/>
    </source>
</evidence>
<accession>P67593</accession>
<accession>Q99V94</accession>
<protein>
    <recommendedName>
        <fullName evidence="1">Tryptophan--tRNA ligase</fullName>
        <ecNumber evidence="1">6.1.1.2</ecNumber>
    </recommendedName>
    <alternativeName>
        <fullName evidence="1">Tryptophanyl-tRNA synthetase</fullName>
        <shortName evidence="1">TrpRS</shortName>
    </alternativeName>
</protein>
<feature type="chain" id="PRO_0000136677" description="Tryptophan--tRNA ligase">
    <location>
        <begin position="1"/>
        <end position="329"/>
    </location>
</feature>
<feature type="short sequence motif" description="'HIGH' region" evidence="1">
    <location>
        <begin position="10"/>
        <end position="18"/>
    </location>
</feature>
<feature type="short sequence motif" description="'KMSKS' region" evidence="1">
    <location>
        <begin position="193"/>
        <end position="197"/>
    </location>
</feature>
<feature type="binding site" evidence="1">
    <location>
        <begin position="9"/>
        <end position="11"/>
    </location>
    <ligand>
        <name>ATP</name>
        <dbReference type="ChEBI" id="CHEBI:30616"/>
    </ligand>
</feature>
<feature type="binding site" evidence="1">
    <location>
        <begin position="17"/>
        <end position="18"/>
    </location>
    <ligand>
        <name>ATP</name>
        <dbReference type="ChEBI" id="CHEBI:30616"/>
    </ligand>
</feature>
<feature type="binding site" evidence="1">
    <location>
        <position position="133"/>
    </location>
    <ligand>
        <name>L-tryptophan</name>
        <dbReference type="ChEBI" id="CHEBI:57912"/>
    </ligand>
</feature>
<feature type="binding site" evidence="1">
    <location>
        <begin position="145"/>
        <end position="147"/>
    </location>
    <ligand>
        <name>ATP</name>
        <dbReference type="ChEBI" id="CHEBI:30616"/>
    </ligand>
</feature>
<feature type="binding site" evidence="1">
    <location>
        <position position="184"/>
    </location>
    <ligand>
        <name>ATP</name>
        <dbReference type="ChEBI" id="CHEBI:30616"/>
    </ligand>
</feature>
<feature type="binding site" evidence="1">
    <location>
        <begin position="193"/>
        <end position="197"/>
    </location>
    <ligand>
        <name>ATP</name>
        <dbReference type="ChEBI" id="CHEBI:30616"/>
    </ligand>
</feature>